<name>MNMC_VIBVY</name>
<sequence>MTSITHAELGWNEVGTPVSDQFDDVYFSNVNGLEETRYVFLKQNLIPERWQEFDRRRFVIGETGFGTGLNFLAVWQAFNDFRRANPDATLKELHFISFEKFPLSKQDLIKAHQAWPELAELAEKLHRHYPPAVPECHRIVLDNGAVTLDLWLGDIKDCLPSVPYGEEGIIDTWFLDGFAPSKNPEMWNQDLFNGMAKLARSECRVATFTSAGFVRRGLIEAGFAMKKVKGFGTKREMIAGCMETRQPQSRHAPYFNRTSASHLDSIAIIGGGIASAALAKALVQRGQKVTLYCKHAQAAEGASGNRQGAVYPLLNGSHDGVSRVFAPAFLFTRQFVEQAAQALTFDHDWCGVTQLMWDEKSTNKLDKMLSGNFAPELIQKLSAEETAAKIGLPIDMASVHYPLGGWLCPAELTQALFAQLDTLDNFTAKFEQSVEQLIWDERSQQWQVHTQGQHDTYSAVVIANGHEFQTFSQTADIPLGQVKGQVSHAPATETLSKLKSVLCYDGYMTPVNPNNQHLCIGASYDRRHLDTEFDVNAQQENAEKLTQCVPNQAWAKEVDTSGNLSRQGIRCVSRDHLPFVGNVGDFSAIKRQYADLPHTQAEEIEVISQFPNLFCLLGLGSRGLSSAPLMAELLASQICNDPLPLPVDVLEELHPSRMWVRKLRKGKAITEL</sequence>
<comment type="function">
    <text evidence="1">Catalyzes the last two steps in the biosynthesis of 5-methylaminomethyl-2-thiouridine (mnm(5)s(2)U) at the wobble position (U34) in tRNA. Catalyzes the FAD-dependent demodification of cmnm(5)s(2)U34 to nm(5)s(2)U34, followed by the transfer of a methyl group from S-adenosyl-L-methionine to nm(5)s(2)U34, to form mnm(5)s(2)U34.</text>
</comment>
<comment type="catalytic activity">
    <reaction evidence="1">
        <text>5-aminomethyl-2-thiouridine(34) in tRNA + S-adenosyl-L-methionine = 5-methylaminomethyl-2-thiouridine(34) in tRNA + S-adenosyl-L-homocysteine + H(+)</text>
        <dbReference type="Rhea" id="RHEA:19569"/>
        <dbReference type="Rhea" id="RHEA-COMP:10195"/>
        <dbReference type="Rhea" id="RHEA-COMP:10197"/>
        <dbReference type="ChEBI" id="CHEBI:15378"/>
        <dbReference type="ChEBI" id="CHEBI:57856"/>
        <dbReference type="ChEBI" id="CHEBI:59789"/>
        <dbReference type="ChEBI" id="CHEBI:74454"/>
        <dbReference type="ChEBI" id="CHEBI:74455"/>
        <dbReference type="EC" id="2.1.1.61"/>
    </reaction>
</comment>
<comment type="cofactor">
    <cofactor evidence="1">
        <name>FAD</name>
        <dbReference type="ChEBI" id="CHEBI:57692"/>
    </cofactor>
</comment>
<comment type="subcellular location">
    <subcellularLocation>
        <location evidence="1">Cytoplasm</location>
    </subcellularLocation>
</comment>
<comment type="similarity">
    <text evidence="1">In the N-terminal section; belongs to the methyltransferase superfamily. tRNA (mnm(5)s(2)U34)-methyltransferase family.</text>
</comment>
<comment type="similarity">
    <text evidence="1">In the C-terminal section; belongs to the DAO family.</text>
</comment>
<reference key="1">
    <citation type="journal article" date="2003" name="Genome Res.">
        <title>Comparative genome analysis of Vibrio vulnificus, a marine pathogen.</title>
        <authorList>
            <person name="Chen C.-Y."/>
            <person name="Wu K.-M."/>
            <person name="Chang Y.-C."/>
            <person name="Chang C.-H."/>
            <person name="Tsai H.-C."/>
            <person name="Liao T.-L."/>
            <person name="Liu Y.-M."/>
            <person name="Chen H.-J."/>
            <person name="Shen A.B.-T."/>
            <person name="Li J.-C."/>
            <person name="Su T.-L."/>
            <person name="Shao C.-P."/>
            <person name="Lee C.-T."/>
            <person name="Hor L.-I."/>
            <person name="Tsai S.-F."/>
        </authorList>
    </citation>
    <scope>NUCLEOTIDE SEQUENCE [LARGE SCALE GENOMIC DNA]</scope>
    <source>
        <strain>YJ016</strain>
    </source>
</reference>
<gene>
    <name evidence="1" type="primary">mnmC</name>
    <name type="ordered locus">VV2430</name>
</gene>
<accession>Q7MIT5</accession>
<evidence type="ECO:0000255" key="1">
    <source>
        <dbReference type="HAMAP-Rule" id="MF_01102"/>
    </source>
</evidence>
<proteinExistence type="inferred from homology"/>
<keyword id="KW-0963">Cytoplasm</keyword>
<keyword id="KW-0274">FAD</keyword>
<keyword id="KW-0285">Flavoprotein</keyword>
<keyword id="KW-0489">Methyltransferase</keyword>
<keyword id="KW-0511">Multifunctional enzyme</keyword>
<keyword id="KW-0560">Oxidoreductase</keyword>
<keyword id="KW-0949">S-adenosyl-L-methionine</keyword>
<keyword id="KW-0808">Transferase</keyword>
<keyword id="KW-0819">tRNA processing</keyword>
<organism>
    <name type="scientific">Vibrio vulnificus (strain YJ016)</name>
    <dbReference type="NCBI Taxonomy" id="196600"/>
    <lineage>
        <taxon>Bacteria</taxon>
        <taxon>Pseudomonadati</taxon>
        <taxon>Pseudomonadota</taxon>
        <taxon>Gammaproteobacteria</taxon>
        <taxon>Vibrionales</taxon>
        <taxon>Vibrionaceae</taxon>
        <taxon>Vibrio</taxon>
    </lineage>
</organism>
<feature type="chain" id="PRO_0000095032" description="tRNA 5-methylaminomethyl-2-thiouridine biosynthesis bifunctional protein MnmC">
    <location>
        <begin position="1"/>
        <end position="672"/>
    </location>
</feature>
<feature type="region of interest" description="tRNA (mnm(5)s(2)U34)-methyltransferase">
    <location>
        <begin position="1"/>
        <end position="243"/>
    </location>
</feature>
<feature type="region of interest" description="FAD-dependent cmnm(5)s(2)U34 oxidoreductase">
    <location>
        <begin position="269"/>
        <end position="672"/>
    </location>
</feature>
<protein>
    <recommendedName>
        <fullName evidence="1">tRNA 5-methylaminomethyl-2-thiouridine biosynthesis bifunctional protein MnmC</fullName>
        <shortName evidence="1">tRNA mnm(5)s(2)U biosynthesis bifunctional protein</shortName>
    </recommendedName>
    <domain>
        <recommendedName>
            <fullName evidence="1">tRNA (mnm(5)s(2)U34)-methyltransferase</fullName>
            <ecNumber evidence="1">2.1.1.61</ecNumber>
        </recommendedName>
    </domain>
    <domain>
        <recommendedName>
            <fullName evidence="1">FAD-dependent cmnm(5)s(2)U34 oxidoreductase</fullName>
            <ecNumber evidence="1">1.5.-.-</ecNumber>
        </recommendedName>
    </domain>
</protein>
<dbReference type="EC" id="2.1.1.61" evidence="1"/>
<dbReference type="EC" id="1.5.-.-" evidence="1"/>
<dbReference type="EMBL" id="BA000037">
    <property type="protein sequence ID" value="BAC95194.1"/>
    <property type="molecule type" value="Genomic_DNA"/>
</dbReference>
<dbReference type="RefSeq" id="WP_011150886.1">
    <property type="nucleotide sequence ID" value="NC_005139.1"/>
</dbReference>
<dbReference type="SMR" id="Q7MIT5"/>
<dbReference type="STRING" id="672.VV93_v1c21330"/>
<dbReference type="KEGG" id="vvy:VV2430"/>
<dbReference type="PATRIC" id="fig|196600.6.peg.2436"/>
<dbReference type="eggNOG" id="COG0665">
    <property type="taxonomic scope" value="Bacteria"/>
</dbReference>
<dbReference type="eggNOG" id="COG4121">
    <property type="taxonomic scope" value="Bacteria"/>
</dbReference>
<dbReference type="HOGENOM" id="CLU_022427_2_1_6"/>
<dbReference type="Proteomes" id="UP000002675">
    <property type="component" value="Chromosome I"/>
</dbReference>
<dbReference type="GO" id="GO:0005737">
    <property type="term" value="C:cytoplasm"/>
    <property type="evidence" value="ECO:0007669"/>
    <property type="project" value="UniProtKB-SubCell"/>
</dbReference>
<dbReference type="GO" id="GO:0050660">
    <property type="term" value="F:flavin adenine dinucleotide binding"/>
    <property type="evidence" value="ECO:0007669"/>
    <property type="project" value="UniProtKB-UniRule"/>
</dbReference>
<dbReference type="GO" id="GO:0016645">
    <property type="term" value="F:oxidoreductase activity, acting on the CH-NH group of donors"/>
    <property type="evidence" value="ECO:0007669"/>
    <property type="project" value="InterPro"/>
</dbReference>
<dbReference type="GO" id="GO:0004808">
    <property type="term" value="F:tRNA (5-methylaminomethyl-2-thiouridylate)(34)-methyltransferase activity"/>
    <property type="evidence" value="ECO:0007669"/>
    <property type="project" value="UniProtKB-EC"/>
</dbReference>
<dbReference type="GO" id="GO:0032259">
    <property type="term" value="P:methylation"/>
    <property type="evidence" value="ECO:0007669"/>
    <property type="project" value="UniProtKB-KW"/>
</dbReference>
<dbReference type="GO" id="GO:0002098">
    <property type="term" value="P:tRNA wobble uridine modification"/>
    <property type="evidence" value="ECO:0007669"/>
    <property type="project" value="TreeGrafter"/>
</dbReference>
<dbReference type="FunFam" id="3.40.50.150:FF:000107">
    <property type="entry name" value="tRNA 5-methylaminomethyl-2-thiouridine biosynthesis bifunctional protein MnmC"/>
    <property type="match status" value="1"/>
</dbReference>
<dbReference type="Gene3D" id="3.30.9.10">
    <property type="entry name" value="D-Amino Acid Oxidase, subunit A, domain 2"/>
    <property type="match status" value="1"/>
</dbReference>
<dbReference type="Gene3D" id="3.50.50.60">
    <property type="entry name" value="FAD/NAD(P)-binding domain"/>
    <property type="match status" value="1"/>
</dbReference>
<dbReference type="Gene3D" id="3.40.50.150">
    <property type="entry name" value="Vaccinia Virus protein VP39"/>
    <property type="match status" value="1"/>
</dbReference>
<dbReference type="HAMAP" id="MF_01102">
    <property type="entry name" value="MnmC"/>
    <property type="match status" value="1"/>
</dbReference>
<dbReference type="InterPro" id="IPR006076">
    <property type="entry name" value="FAD-dep_OxRdtase"/>
</dbReference>
<dbReference type="InterPro" id="IPR036188">
    <property type="entry name" value="FAD/NAD-bd_sf"/>
</dbReference>
<dbReference type="InterPro" id="IPR008471">
    <property type="entry name" value="MnmC-like_methylTransf"/>
</dbReference>
<dbReference type="InterPro" id="IPR029063">
    <property type="entry name" value="SAM-dependent_MTases_sf"/>
</dbReference>
<dbReference type="InterPro" id="IPR023032">
    <property type="entry name" value="tRNA_MAMT_biosynth_bifunc_MnmC"/>
</dbReference>
<dbReference type="InterPro" id="IPR047785">
    <property type="entry name" value="tRNA_MNMC2"/>
</dbReference>
<dbReference type="InterPro" id="IPR017610">
    <property type="entry name" value="tRNA_S-uridine_synth_MnmC_C"/>
</dbReference>
<dbReference type="NCBIfam" id="TIGR03197">
    <property type="entry name" value="MnmC_Cterm"/>
    <property type="match status" value="1"/>
</dbReference>
<dbReference type="NCBIfam" id="NF002481">
    <property type="entry name" value="PRK01747.1-2"/>
    <property type="match status" value="1"/>
</dbReference>
<dbReference type="NCBIfam" id="NF002484">
    <property type="entry name" value="PRK01747.1-5"/>
    <property type="match status" value="1"/>
</dbReference>
<dbReference type="NCBIfam" id="NF033855">
    <property type="entry name" value="tRNA_MNMC2"/>
    <property type="match status" value="1"/>
</dbReference>
<dbReference type="PANTHER" id="PTHR13847">
    <property type="entry name" value="SARCOSINE DEHYDROGENASE-RELATED"/>
    <property type="match status" value="1"/>
</dbReference>
<dbReference type="PANTHER" id="PTHR13847:SF283">
    <property type="entry name" value="TRNA 5-METHYLAMINOMETHYL-2-THIOURIDINE BIOSYNTHESIS BIFUNCTIONAL PROTEIN MNMC"/>
    <property type="match status" value="1"/>
</dbReference>
<dbReference type="Pfam" id="PF01266">
    <property type="entry name" value="DAO"/>
    <property type="match status" value="1"/>
</dbReference>
<dbReference type="Pfam" id="PF05430">
    <property type="entry name" value="Methyltransf_30"/>
    <property type="match status" value="1"/>
</dbReference>
<dbReference type="SUPFAM" id="SSF51905">
    <property type="entry name" value="FAD/NAD(P)-binding domain"/>
    <property type="match status" value="1"/>
</dbReference>